<comment type="function">
    <text evidence="1">Forms part of the ribosomal stalk which helps the ribosome interact with GTP-bound translation factors.</text>
</comment>
<comment type="subunit">
    <text evidence="1">Part of the ribosomal stalk of the 50S ribosomal subunit. Interacts with L10 and the large rRNA to form the base of the stalk. L10 forms an elongated spine to which L12 dimers bind in a sequential fashion forming a multimeric L10(L12)X complex.</text>
</comment>
<comment type="PTM">
    <text evidence="1">One or more lysine residues are methylated.</text>
</comment>
<comment type="similarity">
    <text evidence="1">Belongs to the universal ribosomal protein uL11 family.</text>
</comment>
<name>RL11_PROA2</name>
<sequence>MAKKVVGFIKLQIPAGGANPAPPVGPALGQKGVNIMEFCKQFNAKTQSQAGTIIPVVITVFSDKSFTFITKTPPAAVLLIKEAGLQKGSGEPNKNKVGTVSKEQVRKIAELKMPDLNAVDVEGAMQMVMGTARSMGIVVED</sequence>
<dbReference type="EMBL" id="CP001108">
    <property type="protein sequence ID" value="ACF45341.1"/>
    <property type="molecule type" value="Genomic_DNA"/>
</dbReference>
<dbReference type="RefSeq" id="WP_012504878.1">
    <property type="nucleotide sequence ID" value="NC_011059.1"/>
</dbReference>
<dbReference type="SMR" id="B4S493"/>
<dbReference type="STRING" id="290512.Paes_0284"/>
<dbReference type="KEGG" id="paa:Paes_0284"/>
<dbReference type="eggNOG" id="COG0080">
    <property type="taxonomic scope" value="Bacteria"/>
</dbReference>
<dbReference type="HOGENOM" id="CLU_074237_2_1_10"/>
<dbReference type="Proteomes" id="UP000002725">
    <property type="component" value="Chromosome"/>
</dbReference>
<dbReference type="GO" id="GO:0022625">
    <property type="term" value="C:cytosolic large ribosomal subunit"/>
    <property type="evidence" value="ECO:0007669"/>
    <property type="project" value="TreeGrafter"/>
</dbReference>
<dbReference type="GO" id="GO:0070180">
    <property type="term" value="F:large ribosomal subunit rRNA binding"/>
    <property type="evidence" value="ECO:0007669"/>
    <property type="project" value="UniProtKB-UniRule"/>
</dbReference>
<dbReference type="GO" id="GO:0003735">
    <property type="term" value="F:structural constituent of ribosome"/>
    <property type="evidence" value="ECO:0007669"/>
    <property type="project" value="InterPro"/>
</dbReference>
<dbReference type="GO" id="GO:0006412">
    <property type="term" value="P:translation"/>
    <property type="evidence" value="ECO:0007669"/>
    <property type="project" value="UniProtKB-UniRule"/>
</dbReference>
<dbReference type="CDD" id="cd00349">
    <property type="entry name" value="Ribosomal_L11"/>
    <property type="match status" value="1"/>
</dbReference>
<dbReference type="FunFam" id="1.10.10.250:FF:000001">
    <property type="entry name" value="50S ribosomal protein L11"/>
    <property type="match status" value="1"/>
</dbReference>
<dbReference type="FunFam" id="3.30.1550.10:FF:000001">
    <property type="entry name" value="50S ribosomal protein L11"/>
    <property type="match status" value="1"/>
</dbReference>
<dbReference type="Gene3D" id="1.10.10.250">
    <property type="entry name" value="Ribosomal protein L11, C-terminal domain"/>
    <property type="match status" value="1"/>
</dbReference>
<dbReference type="Gene3D" id="3.30.1550.10">
    <property type="entry name" value="Ribosomal protein L11/L12, N-terminal domain"/>
    <property type="match status" value="1"/>
</dbReference>
<dbReference type="HAMAP" id="MF_00736">
    <property type="entry name" value="Ribosomal_uL11"/>
    <property type="match status" value="1"/>
</dbReference>
<dbReference type="InterPro" id="IPR000911">
    <property type="entry name" value="Ribosomal_uL11"/>
</dbReference>
<dbReference type="InterPro" id="IPR006519">
    <property type="entry name" value="Ribosomal_uL11_bac-typ"/>
</dbReference>
<dbReference type="InterPro" id="IPR020783">
    <property type="entry name" value="Ribosomal_uL11_C"/>
</dbReference>
<dbReference type="InterPro" id="IPR036769">
    <property type="entry name" value="Ribosomal_uL11_C_sf"/>
</dbReference>
<dbReference type="InterPro" id="IPR020784">
    <property type="entry name" value="Ribosomal_uL11_N"/>
</dbReference>
<dbReference type="InterPro" id="IPR036796">
    <property type="entry name" value="Ribosomal_uL11_N_sf"/>
</dbReference>
<dbReference type="NCBIfam" id="TIGR01632">
    <property type="entry name" value="L11_bact"/>
    <property type="match status" value="1"/>
</dbReference>
<dbReference type="PANTHER" id="PTHR11661">
    <property type="entry name" value="60S RIBOSOMAL PROTEIN L12"/>
    <property type="match status" value="1"/>
</dbReference>
<dbReference type="PANTHER" id="PTHR11661:SF1">
    <property type="entry name" value="LARGE RIBOSOMAL SUBUNIT PROTEIN UL11M"/>
    <property type="match status" value="1"/>
</dbReference>
<dbReference type="Pfam" id="PF00298">
    <property type="entry name" value="Ribosomal_L11"/>
    <property type="match status" value="1"/>
</dbReference>
<dbReference type="Pfam" id="PF03946">
    <property type="entry name" value="Ribosomal_L11_N"/>
    <property type="match status" value="1"/>
</dbReference>
<dbReference type="SMART" id="SM00649">
    <property type="entry name" value="RL11"/>
    <property type="match status" value="1"/>
</dbReference>
<dbReference type="SUPFAM" id="SSF54747">
    <property type="entry name" value="Ribosomal L11/L12e N-terminal domain"/>
    <property type="match status" value="1"/>
</dbReference>
<dbReference type="SUPFAM" id="SSF46906">
    <property type="entry name" value="Ribosomal protein L11, C-terminal domain"/>
    <property type="match status" value="1"/>
</dbReference>
<gene>
    <name evidence="1" type="primary">rplK</name>
    <name type="ordered locus">Paes_0284</name>
</gene>
<keyword id="KW-0488">Methylation</keyword>
<keyword id="KW-0687">Ribonucleoprotein</keyword>
<keyword id="KW-0689">Ribosomal protein</keyword>
<keyword id="KW-0694">RNA-binding</keyword>
<keyword id="KW-0699">rRNA-binding</keyword>
<protein>
    <recommendedName>
        <fullName evidence="1">Large ribosomal subunit protein uL11</fullName>
    </recommendedName>
    <alternativeName>
        <fullName evidence="2">50S ribosomal protein L11</fullName>
    </alternativeName>
</protein>
<organism>
    <name type="scientific">Prosthecochloris aestuarii (strain DSM 271 / SK 413)</name>
    <dbReference type="NCBI Taxonomy" id="290512"/>
    <lineage>
        <taxon>Bacteria</taxon>
        <taxon>Pseudomonadati</taxon>
        <taxon>Chlorobiota</taxon>
        <taxon>Chlorobiia</taxon>
        <taxon>Chlorobiales</taxon>
        <taxon>Chlorobiaceae</taxon>
        <taxon>Prosthecochloris</taxon>
    </lineage>
</organism>
<evidence type="ECO:0000255" key="1">
    <source>
        <dbReference type="HAMAP-Rule" id="MF_00736"/>
    </source>
</evidence>
<evidence type="ECO:0000305" key="2"/>
<feature type="chain" id="PRO_1000195692" description="Large ribosomal subunit protein uL11">
    <location>
        <begin position="1"/>
        <end position="141"/>
    </location>
</feature>
<proteinExistence type="inferred from homology"/>
<accession>B4S493</accession>
<reference key="1">
    <citation type="submission" date="2008-06" db="EMBL/GenBank/DDBJ databases">
        <title>Complete sequence of chromosome of Prosthecochloris aestuarii DSM 271.</title>
        <authorList>
            <consortium name="US DOE Joint Genome Institute"/>
            <person name="Lucas S."/>
            <person name="Copeland A."/>
            <person name="Lapidus A."/>
            <person name="Glavina del Rio T."/>
            <person name="Dalin E."/>
            <person name="Tice H."/>
            <person name="Bruce D."/>
            <person name="Goodwin L."/>
            <person name="Pitluck S."/>
            <person name="Schmutz J."/>
            <person name="Larimer F."/>
            <person name="Land M."/>
            <person name="Hauser L."/>
            <person name="Kyrpides N."/>
            <person name="Anderson I."/>
            <person name="Liu Z."/>
            <person name="Li T."/>
            <person name="Zhao F."/>
            <person name="Overmann J."/>
            <person name="Bryant D.A."/>
            <person name="Richardson P."/>
        </authorList>
    </citation>
    <scope>NUCLEOTIDE SEQUENCE [LARGE SCALE GENOMIC DNA]</scope>
    <source>
        <strain>DSM 271 / SK 413</strain>
    </source>
</reference>